<gene>
    <name type="primary">rpmH</name>
    <name type="ordered locus">MYPU_1540</name>
</gene>
<keyword id="KW-1185">Reference proteome</keyword>
<keyword id="KW-0687">Ribonucleoprotein</keyword>
<keyword id="KW-0689">Ribosomal protein</keyword>
<organism>
    <name type="scientific">Mycoplasmopsis pulmonis (strain UAB CTIP)</name>
    <name type="common">Mycoplasma pulmonis</name>
    <dbReference type="NCBI Taxonomy" id="272635"/>
    <lineage>
        <taxon>Bacteria</taxon>
        <taxon>Bacillati</taxon>
        <taxon>Mycoplasmatota</taxon>
        <taxon>Mycoplasmoidales</taxon>
        <taxon>Metamycoplasmataceae</taxon>
        <taxon>Mycoplasmopsis</taxon>
    </lineage>
</organism>
<sequence>MSKRTYQPNKRKHAKTHGFRARMATKKGRLVLASRRAKGRKQLTVSDK</sequence>
<accession>Q98R56</accession>
<protein>
    <recommendedName>
        <fullName evidence="1">Large ribosomal subunit protein bL34</fullName>
    </recommendedName>
    <alternativeName>
        <fullName>50S ribosomal protein L34</fullName>
    </alternativeName>
</protein>
<name>RL34_MYCPU</name>
<comment type="similarity">
    <text evidence="1">Belongs to the bacterial ribosomal protein bL34 family.</text>
</comment>
<dbReference type="EMBL" id="AL445563">
    <property type="protein sequence ID" value="CAC13327.1"/>
    <property type="molecule type" value="Genomic_DNA"/>
</dbReference>
<dbReference type="PIR" id="B90531">
    <property type="entry name" value="B90531"/>
</dbReference>
<dbReference type="RefSeq" id="WP_010924958.1">
    <property type="nucleotide sequence ID" value="NC_002771.1"/>
</dbReference>
<dbReference type="SMR" id="Q98R56"/>
<dbReference type="STRING" id="272635.gene:17576738"/>
<dbReference type="KEGG" id="mpu:MYPU_1540"/>
<dbReference type="eggNOG" id="COG0230">
    <property type="taxonomic scope" value="Bacteria"/>
</dbReference>
<dbReference type="HOGENOM" id="CLU_129938_2_0_14"/>
<dbReference type="BioCyc" id="MPUL272635:G1GT6-155-MONOMER"/>
<dbReference type="Proteomes" id="UP000000528">
    <property type="component" value="Chromosome"/>
</dbReference>
<dbReference type="GO" id="GO:1990904">
    <property type="term" value="C:ribonucleoprotein complex"/>
    <property type="evidence" value="ECO:0007669"/>
    <property type="project" value="UniProtKB-KW"/>
</dbReference>
<dbReference type="GO" id="GO:0005840">
    <property type="term" value="C:ribosome"/>
    <property type="evidence" value="ECO:0007669"/>
    <property type="project" value="UniProtKB-KW"/>
</dbReference>
<dbReference type="GO" id="GO:0003735">
    <property type="term" value="F:structural constituent of ribosome"/>
    <property type="evidence" value="ECO:0007669"/>
    <property type="project" value="InterPro"/>
</dbReference>
<dbReference type="GO" id="GO:0006412">
    <property type="term" value="P:translation"/>
    <property type="evidence" value="ECO:0007669"/>
    <property type="project" value="UniProtKB-UniRule"/>
</dbReference>
<dbReference type="FunFam" id="1.10.287.3980:FF:000001">
    <property type="entry name" value="Mitochondrial ribosomal protein L34"/>
    <property type="match status" value="1"/>
</dbReference>
<dbReference type="Gene3D" id="1.10.287.3980">
    <property type="match status" value="1"/>
</dbReference>
<dbReference type="HAMAP" id="MF_00391">
    <property type="entry name" value="Ribosomal_bL34"/>
    <property type="match status" value="1"/>
</dbReference>
<dbReference type="InterPro" id="IPR000271">
    <property type="entry name" value="Ribosomal_bL34"/>
</dbReference>
<dbReference type="InterPro" id="IPR020939">
    <property type="entry name" value="Ribosomal_bL34_CS"/>
</dbReference>
<dbReference type="NCBIfam" id="TIGR01030">
    <property type="entry name" value="rpmH_bact"/>
    <property type="match status" value="1"/>
</dbReference>
<dbReference type="PANTHER" id="PTHR14503:SF4">
    <property type="entry name" value="LARGE RIBOSOMAL SUBUNIT PROTEIN BL34M"/>
    <property type="match status" value="1"/>
</dbReference>
<dbReference type="PANTHER" id="PTHR14503">
    <property type="entry name" value="MITOCHONDRIAL RIBOSOMAL PROTEIN 34 FAMILY MEMBER"/>
    <property type="match status" value="1"/>
</dbReference>
<dbReference type="Pfam" id="PF00468">
    <property type="entry name" value="Ribosomal_L34"/>
    <property type="match status" value="1"/>
</dbReference>
<dbReference type="PROSITE" id="PS00784">
    <property type="entry name" value="RIBOSOMAL_L34"/>
    <property type="match status" value="1"/>
</dbReference>
<proteinExistence type="inferred from homology"/>
<feature type="chain" id="PRO_0000187420" description="Large ribosomal subunit protein bL34">
    <location>
        <begin position="1"/>
        <end position="48"/>
    </location>
</feature>
<reference key="1">
    <citation type="journal article" date="2001" name="Nucleic Acids Res.">
        <title>The complete genome sequence of the murine respiratory pathogen Mycoplasma pulmonis.</title>
        <authorList>
            <person name="Chambaud I."/>
            <person name="Heilig R."/>
            <person name="Ferris S."/>
            <person name="Barbe V."/>
            <person name="Samson D."/>
            <person name="Galisson F."/>
            <person name="Moszer I."/>
            <person name="Dybvig K."/>
            <person name="Wroblewski H."/>
            <person name="Viari A."/>
            <person name="Rocha E.P.C."/>
            <person name="Blanchard A."/>
        </authorList>
    </citation>
    <scope>NUCLEOTIDE SEQUENCE [LARGE SCALE GENOMIC DNA]</scope>
    <source>
        <strain>UAB CTIP</strain>
    </source>
</reference>
<evidence type="ECO:0000305" key="1"/>